<proteinExistence type="inferred from homology"/>
<accession>A0KTW2</accession>
<dbReference type="EC" id="2.1.1.177" evidence="1"/>
<dbReference type="EMBL" id="CP000469">
    <property type="protein sequence ID" value="ABK47231.1"/>
    <property type="molecule type" value="Genomic_DNA"/>
</dbReference>
<dbReference type="RefSeq" id="WP_011621784.1">
    <property type="nucleotide sequence ID" value="NC_008577.1"/>
</dbReference>
<dbReference type="SMR" id="A0KTW2"/>
<dbReference type="STRING" id="94122.Shewana3_0996"/>
<dbReference type="GeneID" id="94726978"/>
<dbReference type="KEGG" id="shn:Shewana3_0996"/>
<dbReference type="eggNOG" id="COG1576">
    <property type="taxonomic scope" value="Bacteria"/>
</dbReference>
<dbReference type="HOGENOM" id="CLU_100552_1_0_6"/>
<dbReference type="OrthoDB" id="9806643at2"/>
<dbReference type="Proteomes" id="UP000002589">
    <property type="component" value="Chromosome"/>
</dbReference>
<dbReference type="GO" id="GO:0005737">
    <property type="term" value="C:cytoplasm"/>
    <property type="evidence" value="ECO:0007669"/>
    <property type="project" value="UniProtKB-SubCell"/>
</dbReference>
<dbReference type="GO" id="GO:0070038">
    <property type="term" value="F:rRNA (pseudouridine-N3-)-methyltransferase activity"/>
    <property type="evidence" value="ECO:0007669"/>
    <property type="project" value="UniProtKB-UniRule"/>
</dbReference>
<dbReference type="CDD" id="cd18081">
    <property type="entry name" value="RlmH-like"/>
    <property type="match status" value="1"/>
</dbReference>
<dbReference type="Gene3D" id="3.40.1280.10">
    <property type="match status" value="1"/>
</dbReference>
<dbReference type="HAMAP" id="MF_00658">
    <property type="entry name" value="23SrRNA_methyltr_H"/>
    <property type="match status" value="1"/>
</dbReference>
<dbReference type="InterPro" id="IPR029028">
    <property type="entry name" value="Alpha/beta_knot_MTases"/>
</dbReference>
<dbReference type="InterPro" id="IPR003742">
    <property type="entry name" value="RlmH-like"/>
</dbReference>
<dbReference type="InterPro" id="IPR029026">
    <property type="entry name" value="tRNA_m1G_MTases_N"/>
</dbReference>
<dbReference type="NCBIfam" id="NF000984">
    <property type="entry name" value="PRK00103.1-1"/>
    <property type="match status" value="1"/>
</dbReference>
<dbReference type="NCBIfam" id="NF000986">
    <property type="entry name" value="PRK00103.1-4"/>
    <property type="match status" value="1"/>
</dbReference>
<dbReference type="NCBIfam" id="TIGR00246">
    <property type="entry name" value="tRNA_RlmH_YbeA"/>
    <property type="match status" value="1"/>
</dbReference>
<dbReference type="PANTHER" id="PTHR33603">
    <property type="entry name" value="METHYLTRANSFERASE"/>
    <property type="match status" value="1"/>
</dbReference>
<dbReference type="PANTHER" id="PTHR33603:SF1">
    <property type="entry name" value="RIBOSOMAL RNA LARGE SUBUNIT METHYLTRANSFERASE H"/>
    <property type="match status" value="1"/>
</dbReference>
<dbReference type="Pfam" id="PF02590">
    <property type="entry name" value="SPOUT_MTase"/>
    <property type="match status" value="1"/>
</dbReference>
<dbReference type="PIRSF" id="PIRSF004505">
    <property type="entry name" value="MT_bac"/>
    <property type="match status" value="1"/>
</dbReference>
<dbReference type="SUPFAM" id="SSF75217">
    <property type="entry name" value="alpha/beta knot"/>
    <property type="match status" value="1"/>
</dbReference>
<keyword id="KW-0963">Cytoplasm</keyword>
<keyword id="KW-0489">Methyltransferase</keyword>
<keyword id="KW-0698">rRNA processing</keyword>
<keyword id="KW-0949">S-adenosyl-L-methionine</keyword>
<keyword id="KW-0808">Transferase</keyword>
<gene>
    <name evidence="1" type="primary">rlmH</name>
    <name type="ordered locus">Shewana3_0996</name>
</gene>
<organism>
    <name type="scientific">Shewanella sp. (strain ANA-3)</name>
    <dbReference type="NCBI Taxonomy" id="94122"/>
    <lineage>
        <taxon>Bacteria</taxon>
        <taxon>Pseudomonadati</taxon>
        <taxon>Pseudomonadota</taxon>
        <taxon>Gammaproteobacteria</taxon>
        <taxon>Alteromonadales</taxon>
        <taxon>Shewanellaceae</taxon>
        <taxon>Shewanella</taxon>
    </lineage>
</organism>
<reference key="1">
    <citation type="submission" date="2006-09" db="EMBL/GenBank/DDBJ databases">
        <title>Complete sequence of chromosome 1 of Shewanella sp. ANA-3.</title>
        <authorList>
            <person name="Copeland A."/>
            <person name="Lucas S."/>
            <person name="Lapidus A."/>
            <person name="Barry K."/>
            <person name="Detter J.C."/>
            <person name="Glavina del Rio T."/>
            <person name="Hammon N."/>
            <person name="Israni S."/>
            <person name="Dalin E."/>
            <person name="Tice H."/>
            <person name="Pitluck S."/>
            <person name="Chertkov O."/>
            <person name="Brettin T."/>
            <person name="Bruce D."/>
            <person name="Han C."/>
            <person name="Tapia R."/>
            <person name="Gilna P."/>
            <person name="Schmutz J."/>
            <person name="Larimer F."/>
            <person name="Land M."/>
            <person name="Hauser L."/>
            <person name="Kyrpides N."/>
            <person name="Kim E."/>
            <person name="Newman D."/>
            <person name="Salticov C."/>
            <person name="Konstantinidis K."/>
            <person name="Klappenback J."/>
            <person name="Tiedje J."/>
            <person name="Richardson P."/>
        </authorList>
    </citation>
    <scope>NUCLEOTIDE SEQUENCE [LARGE SCALE GENOMIC DNA]</scope>
    <source>
        <strain>ANA-3</strain>
    </source>
</reference>
<sequence length="156" mass="17528">MKLQLIAVGTRMPDWVTRGFEEYQRRFPRDMALELIEIPAGKRGKNADIVRILQKEGEQMLAAIPKGNHIVTLDLPGKNWTTPELATAMNKWQLDGRDVSLLVGGPEGLAPACKEAAHQSWCLSALTLPHPLVRIVVAESLYRAWSVNTNHPYHRE</sequence>
<feature type="chain" id="PRO_1000061840" description="Ribosomal RNA large subunit methyltransferase H">
    <location>
        <begin position="1"/>
        <end position="156"/>
    </location>
</feature>
<feature type="binding site" evidence="1">
    <location>
        <position position="73"/>
    </location>
    <ligand>
        <name>S-adenosyl-L-methionine</name>
        <dbReference type="ChEBI" id="CHEBI:59789"/>
    </ligand>
</feature>
<feature type="binding site" evidence="1">
    <location>
        <position position="104"/>
    </location>
    <ligand>
        <name>S-adenosyl-L-methionine</name>
        <dbReference type="ChEBI" id="CHEBI:59789"/>
    </ligand>
</feature>
<feature type="binding site" evidence="1">
    <location>
        <begin position="123"/>
        <end position="128"/>
    </location>
    <ligand>
        <name>S-adenosyl-L-methionine</name>
        <dbReference type="ChEBI" id="CHEBI:59789"/>
    </ligand>
</feature>
<comment type="function">
    <text evidence="1">Specifically methylates the pseudouridine at position 1915 (m3Psi1915) in 23S rRNA.</text>
</comment>
<comment type="catalytic activity">
    <reaction evidence="1">
        <text>pseudouridine(1915) in 23S rRNA + S-adenosyl-L-methionine = N(3)-methylpseudouridine(1915) in 23S rRNA + S-adenosyl-L-homocysteine + H(+)</text>
        <dbReference type="Rhea" id="RHEA:42752"/>
        <dbReference type="Rhea" id="RHEA-COMP:10221"/>
        <dbReference type="Rhea" id="RHEA-COMP:10222"/>
        <dbReference type="ChEBI" id="CHEBI:15378"/>
        <dbReference type="ChEBI" id="CHEBI:57856"/>
        <dbReference type="ChEBI" id="CHEBI:59789"/>
        <dbReference type="ChEBI" id="CHEBI:65314"/>
        <dbReference type="ChEBI" id="CHEBI:74486"/>
        <dbReference type="EC" id="2.1.1.177"/>
    </reaction>
</comment>
<comment type="subunit">
    <text evidence="1">Homodimer.</text>
</comment>
<comment type="subcellular location">
    <subcellularLocation>
        <location evidence="1">Cytoplasm</location>
    </subcellularLocation>
</comment>
<comment type="similarity">
    <text evidence="1">Belongs to the RNA methyltransferase RlmH family.</text>
</comment>
<evidence type="ECO:0000255" key="1">
    <source>
        <dbReference type="HAMAP-Rule" id="MF_00658"/>
    </source>
</evidence>
<protein>
    <recommendedName>
        <fullName evidence="1">Ribosomal RNA large subunit methyltransferase H</fullName>
        <ecNumber evidence="1">2.1.1.177</ecNumber>
    </recommendedName>
    <alternativeName>
        <fullName evidence="1">23S rRNA (pseudouridine1915-N3)-methyltransferase</fullName>
    </alternativeName>
    <alternativeName>
        <fullName evidence="1">23S rRNA m3Psi1915 methyltransferase</fullName>
    </alternativeName>
    <alternativeName>
        <fullName evidence="1">rRNA (pseudouridine-N3-)-methyltransferase RlmH</fullName>
    </alternativeName>
</protein>
<name>RLMH_SHESA</name>